<name>AL1A1_CHICK</name>
<dbReference type="EC" id="1.2.1.19" evidence="3"/>
<dbReference type="EC" id="1.2.1.28" evidence="1"/>
<dbReference type="EC" id="1.2.1.3" evidence="1"/>
<dbReference type="EC" id="1.2.1.36" evidence="4"/>
<dbReference type="EMBL" id="X58869">
    <property type="protein sequence ID" value="CAA41679.1"/>
    <property type="molecule type" value="mRNA"/>
</dbReference>
<dbReference type="PIR" id="S14629">
    <property type="entry name" value="S14629"/>
</dbReference>
<dbReference type="RefSeq" id="NP_989908.1">
    <property type="nucleotide sequence ID" value="NM_204577.4"/>
</dbReference>
<dbReference type="SMR" id="P27463"/>
<dbReference type="FunCoup" id="P27463">
    <property type="interactions" value="1461"/>
</dbReference>
<dbReference type="STRING" id="9031.ENSGALP00000024396"/>
<dbReference type="BindingDB" id="P27463"/>
<dbReference type="ChEMBL" id="CHEMBL4295737"/>
<dbReference type="GlyGen" id="P27463">
    <property type="glycosylation" value="1 site"/>
</dbReference>
<dbReference type="PaxDb" id="9031-ENSGALP00000024396"/>
<dbReference type="GeneID" id="395264"/>
<dbReference type="KEGG" id="gga:395264"/>
<dbReference type="CTD" id="216"/>
<dbReference type="VEuPathDB" id="HostDB:geneid_395264"/>
<dbReference type="eggNOG" id="KOG2450">
    <property type="taxonomic scope" value="Eukaryota"/>
</dbReference>
<dbReference type="InParanoid" id="P27463"/>
<dbReference type="OrthoDB" id="310895at2759"/>
<dbReference type="PhylomeDB" id="P27463"/>
<dbReference type="BRENDA" id="1.2.1.36">
    <property type="organism ID" value="1306"/>
</dbReference>
<dbReference type="UniPathway" id="UPA00912"/>
<dbReference type="PRO" id="PR:P27463"/>
<dbReference type="Proteomes" id="UP000000539">
    <property type="component" value="Unassembled WGS sequence"/>
</dbReference>
<dbReference type="GO" id="GO:0030424">
    <property type="term" value="C:axon"/>
    <property type="evidence" value="ECO:0000250"/>
    <property type="project" value="UniProtKB"/>
</dbReference>
<dbReference type="GO" id="GO:0005829">
    <property type="term" value="C:cytosol"/>
    <property type="evidence" value="ECO:0000250"/>
    <property type="project" value="UniProtKB"/>
</dbReference>
<dbReference type="GO" id="GO:0045202">
    <property type="term" value="C:synapse"/>
    <property type="evidence" value="ECO:0000250"/>
    <property type="project" value="UniProtKB"/>
</dbReference>
<dbReference type="GO" id="GO:0106373">
    <property type="term" value="F:3-deoxyglucosone dehydrogenase activity"/>
    <property type="evidence" value="ECO:0000250"/>
    <property type="project" value="UniProtKB"/>
</dbReference>
<dbReference type="GO" id="GO:0140087">
    <property type="term" value="F:acetaldehyde dehydrogenase (NAD+) activity"/>
    <property type="evidence" value="ECO:0007669"/>
    <property type="project" value="RHEA"/>
</dbReference>
<dbReference type="GO" id="GO:0004029">
    <property type="term" value="F:aldehyde dehydrogenase (NAD+) activity"/>
    <property type="evidence" value="ECO:0000250"/>
    <property type="project" value="UniProtKB"/>
</dbReference>
<dbReference type="GO" id="GO:0019145">
    <property type="term" value="F:aminobutyraldehyde dehydrogenase (NAD+) activity"/>
    <property type="evidence" value="ECO:0000250"/>
    <property type="project" value="UniProtKB"/>
</dbReference>
<dbReference type="GO" id="GO:0018479">
    <property type="term" value="F:benzaldehyde dehydrogenase (NAD+) activity"/>
    <property type="evidence" value="ECO:0000318"/>
    <property type="project" value="GO_Central"/>
</dbReference>
<dbReference type="GO" id="GO:0001758">
    <property type="term" value="F:retinal dehydrogenase activity"/>
    <property type="evidence" value="ECO:0000250"/>
    <property type="project" value="UniProtKB"/>
</dbReference>
<dbReference type="GO" id="GO:0110095">
    <property type="term" value="P:cellular detoxification of aldehyde"/>
    <property type="evidence" value="ECO:0000250"/>
    <property type="project" value="UniProtKB"/>
</dbReference>
<dbReference type="GO" id="GO:0030392">
    <property type="term" value="P:fructosamine catabolic process"/>
    <property type="evidence" value="ECO:0000250"/>
    <property type="project" value="UniProtKB"/>
</dbReference>
<dbReference type="GO" id="GO:0009449">
    <property type="term" value="P:gamma-aminobutyric acid biosynthetic process"/>
    <property type="evidence" value="ECO:0000250"/>
    <property type="project" value="UniProtKB"/>
</dbReference>
<dbReference type="GO" id="GO:0001523">
    <property type="term" value="P:retinoid metabolic process"/>
    <property type="evidence" value="ECO:0000250"/>
    <property type="project" value="UniProtKB"/>
</dbReference>
<dbReference type="GO" id="GO:0042572">
    <property type="term" value="P:retinol metabolic process"/>
    <property type="evidence" value="ECO:0007669"/>
    <property type="project" value="UniProtKB-UniPathway"/>
</dbReference>
<dbReference type="CDD" id="cd07141">
    <property type="entry name" value="ALDH_F1AB_F2_RALDH1"/>
    <property type="match status" value="1"/>
</dbReference>
<dbReference type="FunFam" id="3.40.605.10:FF:000050">
    <property type="entry name" value="Aldehyde dehydrogenase, mitochondrial"/>
    <property type="match status" value="1"/>
</dbReference>
<dbReference type="FunFam" id="3.40.605.10:FF:000026">
    <property type="entry name" value="Aldehyde dehydrogenase, putative"/>
    <property type="match status" value="1"/>
</dbReference>
<dbReference type="FunFam" id="3.40.309.10:FF:000001">
    <property type="entry name" value="Mitochondrial aldehyde dehydrogenase 2"/>
    <property type="match status" value="1"/>
</dbReference>
<dbReference type="Gene3D" id="3.40.605.10">
    <property type="entry name" value="Aldehyde Dehydrogenase, Chain A, domain 1"/>
    <property type="match status" value="1"/>
</dbReference>
<dbReference type="Gene3D" id="3.40.309.10">
    <property type="entry name" value="Aldehyde Dehydrogenase, Chain A, domain 2"/>
    <property type="match status" value="1"/>
</dbReference>
<dbReference type="InterPro" id="IPR016161">
    <property type="entry name" value="Ald_DH/histidinol_DH"/>
</dbReference>
<dbReference type="InterPro" id="IPR016163">
    <property type="entry name" value="Ald_DH_C"/>
</dbReference>
<dbReference type="InterPro" id="IPR016160">
    <property type="entry name" value="Ald_DH_CS_CYS"/>
</dbReference>
<dbReference type="InterPro" id="IPR029510">
    <property type="entry name" value="Ald_DH_CS_GLU"/>
</dbReference>
<dbReference type="InterPro" id="IPR016162">
    <property type="entry name" value="Ald_DH_N"/>
</dbReference>
<dbReference type="InterPro" id="IPR015590">
    <property type="entry name" value="Aldehyde_DH_dom"/>
</dbReference>
<dbReference type="PANTHER" id="PTHR11699">
    <property type="entry name" value="ALDEHYDE DEHYDROGENASE-RELATED"/>
    <property type="match status" value="1"/>
</dbReference>
<dbReference type="Pfam" id="PF00171">
    <property type="entry name" value="Aldedh"/>
    <property type="match status" value="1"/>
</dbReference>
<dbReference type="SUPFAM" id="SSF53720">
    <property type="entry name" value="ALDH-like"/>
    <property type="match status" value="1"/>
</dbReference>
<dbReference type="PROSITE" id="PS00070">
    <property type="entry name" value="ALDEHYDE_DEHYDR_CYS"/>
    <property type="match status" value="1"/>
</dbReference>
<dbReference type="PROSITE" id="PS00687">
    <property type="entry name" value="ALDEHYDE_DEHYDR_GLU"/>
    <property type="match status" value="1"/>
</dbReference>
<gene>
    <name evidence="1" type="primary">ALDH1A1</name>
</gene>
<comment type="function">
    <text evidence="1 3">Cytosolic dehydrogenase that catalyzes the irreversible oxidation of a wide range of aldehydes to their corresponding carboxylic acid (By similarity). Functions downstream of retinol dehydrogenases and catalyzes the oxidation of retinaldehyde into retinoic acid, the second step in the oxidation of retinol/vitamin A into retinoic acid. This pathway is crucial to control the levels of retinol and retinoic acid, two important molecules which excess can be teratogenic and cytotoxic (By similarity). Also oxidizes aldehydes resulting from lipid peroxidation like (E)-4-hydroxynon-2-enal/HNE, malonaldehyde and hexanal that form protein adducts and are highly cytotoxic. By participating for instance to the clearance of (E)-4-hydroxynon-2-enal/HNE in the lens epithelium prevents the formation of HNE-protein adducts and lens opacification. Also functions downstream of fructosamine-3-kinase in the fructosamine degradation pathway by catalyzing the oxidation of 3-deoxyglucosone, the carbohydrate product of fructosamine 3-phosphate decomposition, which is itself a potent glycating agent that may react with lysine and arginine side-chains of proteins (By similarity). Also has an aminobutyraldehyde dehydrogenase activity and is probably part of an alternative pathway for the biosynthesis of GABA/4-aminobutanoate in midbrain, thereby playing a role in GABAergic synaptic transmission (By similarity).</text>
</comment>
<comment type="catalytic activity">
    <reaction evidence="1">
        <text>an aldehyde + NAD(+) + H2O = a carboxylate + NADH + 2 H(+)</text>
        <dbReference type="Rhea" id="RHEA:16185"/>
        <dbReference type="ChEBI" id="CHEBI:15377"/>
        <dbReference type="ChEBI" id="CHEBI:15378"/>
        <dbReference type="ChEBI" id="CHEBI:17478"/>
        <dbReference type="ChEBI" id="CHEBI:29067"/>
        <dbReference type="ChEBI" id="CHEBI:57540"/>
        <dbReference type="ChEBI" id="CHEBI:57945"/>
        <dbReference type="EC" id="1.2.1.3"/>
    </reaction>
    <physiologicalReaction direction="left-to-right" evidence="1">
        <dbReference type="Rhea" id="RHEA:16186"/>
    </physiologicalReaction>
</comment>
<comment type="catalytic activity">
    <reaction evidence="4">
        <text>all-trans-retinal + NAD(+) + H2O = all-trans-retinoate + NADH + 2 H(+)</text>
        <dbReference type="Rhea" id="RHEA:42080"/>
        <dbReference type="ChEBI" id="CHEBI:15377"/>
        <dbReference type="ChEBI" id="CHEBI:15378"/>
        <dbReference type="ChEBI" id="CHEBI:17898"/>
        <dbReference type="ChEBI" id="CHEBI:35291"/>
        <dbReference type="ChEBI" id="CHEBI:57540"/>
        <dbReference type="ChEBI" id="CHEBI:57945"/>
        <dbReference type="EC" id="1.2.1.36"/>
    </reaction>
    <physiologicalReaction direction="left-to-right" evidence="4">
        <dbReference type="Rhea" id="RHEA:42081"/>
    </physiologicalReaction>
</comment>
<comment type="catalytic activity">
    <reaction evidence="4">
        <text>9-cis-retinal + NAD(+) + H2O = 9-cis-retinoate + NADH + 2 H(+)</text>
        <dbReference type="Rhea" id="RHEA:42084"/>
        <dbReference type="ChEBI" id="CHEBI:15377"/>
        <dbReference type="ChEBI" id="CHEBI:15378"/>
        <dbReference type="ChEBI" id="CHEBI:57540"/>
        <dbReference type="ChEBI" id="CHEBI:57945"/>
        <dbReference type="ChEBI" id="CHEBI:78273"/>
        <dbReference type="ChEBI" id="CHEBI:78630"/>
    </reaction>
    <physiologicalReaction direction="left-to-right" evidence="4">
        <dbReference type="Rhea" id="RHEA:42085"/>
    </physiologicalReaction>
</comment>
<comment type="catalytic activity">
    <reaction evidence="4">
        <text>11-cis-retinal + NAD(+) + H2O = 11-cis-retinoate + NADH + 2 H(+)</text>
        <dbReference type="Rhea" id="RHEA:47132"/>
        <dbReference type="ChEBI" id="CHEBI:15377"/>
        <dbReference type="ChEBI" id="CHEBI:15378"/>
        <dbReference type="ChEBI" id="CHEBI:16066"/>
        <dbReference type="ChEBI" id="CHEBI:57540"/>
        <dbReference type="ChEBI" id="CHEBI:57945"/>
        <dbReference type="ChEBI" id="CHEBI:87435"/>
    </reaction>
    <physiologicalReaction direction="left-to-right" evidence="4">
        <dbReference type="Rhea" id="RHEA:47133"/>
    </physiologicalReaction>
</comment>
<comment type="catalytic activity">
    <reaction evidence="6">
        <text>13-cis-retinal + NAD(+) + H2O = 13-cis-retinoate + NADH + 2 H(+)</text>
        <dbReference type="Rhea" id="RHEA:67332"/>
        <dbReference type="ChEBI" id="CHEBI:15377"/>
        <dbReference type="ChEBI" id="CHEBI:15378"/>
        <dbReference type="ChEBI" id="CHEBI:45487"/>
        <dbReference type="ChEBI" id="CHEBI:57540"/>
        <dbReference type="ChEBI" id="CHEBI:57945"/>
        <dbReference type="ChEBI" id="CHEBI:169952"/>
    </reaction>
    <physiologicalReaction direction="left-to-right" evidence="6">
        <dbReference type="Rhea" id="RHEA:67333"/>
    </physiologicalReaction>
</comment>
<comment type="catalytic activity">
    <reaction evidence="1">
        <text>3-deoxyglucosone + NAD(+) + H2O = 2-dehydro-3-deoxy-D-gluconate + NADH + 2 H(+)</text>
        <dbReference type="Rhea" id="RHEA:67244"/>
        <dbReference type="ChEBI" id="CHEBI:15377"/>
        <dbReference type="ChEBI" id="CHEBI:15378"/>
        <dbReference type="ChEBI" id="CHEBI:57540"/>
        <dbReference type="ChEBI" id="CHEBI:57945"/>
        <dbReference type="ChEBI" id="CHEBI:57990"/>
        <dbReference type="ChEBI" id="CHEBI:60777"/>
    </reaction>
    <physiologicalReaction direction="left-to-right" evidence="1">
        <dbReference type="Rhea" id="RHEA:67245"/>
    </physiologicalReaction>
</comment>
<comment type="catalytic activity">
    <reaction evidence="1">
        <text>(E)-4-hydroxynon-2-enal + NAD(+) + H2O = (E)-4-hydroxynon-2-enoate + NADH + 2 H(+)</text>
        <dbReference type="Rhea" id="RHEA:67248"/>
        <dbReference type="ChEBI" id="CHEBI:15377"/>
        <dbReference type="ChEBI" id="CHEBI:15378"/>
        <dbReference type="ChEBI" id="CHEBI:57540"/>
        <dbReference type="ChEBI" id="CHEBI:57945"/>
        <dbReference type="ChEBI" id="CHEBI:58968"/>
        <dbReference type="ChEBI" id="CHEBI:142920"/>
    </reaction>
    <physiologicalReaction direction="left-to-right" evidence="1">
        <dbReference type="Rhea" id="RHEA:67249"/>
    </physiologicalReaction>
</comment>
<comment type="catalytic activity">
    <reaction evidence="1">
        <text>malonaldehyde + NAD(+) + H2O = 3-oxopropanoate + NADH + 2 H(+)</text>
        <dbReference type="Rhea" id="RHEA:67252"/>
        <dbReference type="ChEBI" id="CHEBI:15377"/>
        <dbReference type="ChEBI" id="CHEBI:15378"/>
        <dbReference type="ChEBI" id="CHEBI:33190"/>
        <dbReference type="ChEBI" id="CHEBI:57540"/>
        <dbReference type="ChEBI" id="CHEBI:57945"/>
        <dbReference type="ChEBI" id="CHEBI:566274"/>
    </reaction>
    <physiologicalReaction direction="left-to-right" evidence="1">
        <dbReference type="Rhea" id="RHEA:67253"/>
    </physiologicalReaction>
</comment>
<comment type="catalytic activity">
    <reaction evidence="1">
        <text>hexanal + NAD(+) + H2O = hexanoate + NADH + 2 H(+)</text>
        <dbReference type="Rhea" id="RHEA:67276"/>
        <dbReference type="ChEBI" id="CHEBI:15377"/>
        <dbReference type="ChEBI" id="CHEBI:15378"/>
        <dbReference type="ChEBI" id="CHEBI:17120"/>
        <dbReference type="ChEBI" id="CHEBI:57540"/>
        <dbReference type="ChEBI" id="CHEBI:57945"/>
        <dbReference type="ChEBI" id="CHEBI:88528"/>
    </reaction>
    <physiologicalReaction direction="left-to-right" evidence="1">
        <dbReference type="Rhea" id="RHEA:67277"/>
    </physiologicalReaction>
</comment>
<comment type="catalytic activity">
    <reaction evidence="1">
        <text>propanal + NAD(+) + H2O = propanoate + NADH + 2 H(+)</text>
        <dbReference type="Rhea" id="RHEA:67256"/>
        <dbReference type="ChEBI" id="CHEBI:15377"/>
        <dbReference type="ChEBI" id="CHEBI:15378"/>
        <dbReference type="ChEBI" id="CHEBI:17153"/>
        <dbReference type="ChEBI" id="CHEBI:17272"/>
        <dbReference type="ChEBI" id="CHEBI:57540"/>
        <dbReference type="ChEBI" id="CHEBI:57945"/>
    </reaction>
    <physiologicalReaction direction="left-to-right" evidence="1">
        <dbReference type="Rhea" id="RHEA:67257"/>
    </physiologicalReaction>
</comment>
<comment type="catalytic activity">
    <reaction evidence="1">
        <text>acetaldehyde + NAD(+) + H2O = acetate + NADH + 2 H(+)</text>
        <dbReference type="Rhea" id="RHEA:25294"/>
        <dbReference type="ChEBI" id="CHEBI:15343"/>
        <dbReference type="ChEBI" id="CHEBI:15377"/>
        <dbReference type="ChEBI" id="CHEBI:15378"/>
        <dbReference type="ChEBI" id="CHEBI:30089"/>
        <dbReference type="ChEBI" id="CHEBI:57540"/>
        <dbReference type="ChEBI" id="CHEBI:57945"/>
        <dbReference type="EC" id="1.2.1.3"/>
    </reaction>
    <physiologicalReaction direction="left-to-right" evidence="1">
        <dbReference type="Rhea" id="RHEA:25295"/>
    </physiologicalReaction>
</comment>
<comment type="catalytic activity">
    <reaction evidence="1">
        <text>benzaldehyde + NAD(+) + H2O = benzoate + NADH + 2 H(+)</text>
        <dbReference type="Rhea" id="RHEA:11840"/>
        <dbReference type="ChEBI" id="CHEBI:15377"/>
        <dbReference type="ChEBI" id="CHEBI:15378"/>
        <dbReference type="ChEBI" id="CHEBI:16150"/>
        <dbReference type="ChEBI" id="CHEBI:17169"/>
        <dbReference type="ChEBI" id="CHEBI:57540"/>
        <dbReference type="ChEBI" id="CHEBI:57945"/>
        <dbReference type="EC" id="1.2.1.28"/>
    </reaction>
    <physiologicalReaction direction="left-to-right" evidence="1">
        <dbReference type="Rhea" id="RHEA:11841"/>
    </physiologicalReaction>
</comment>
<comment type="catalytic activity">
    <reaction evidence="3">
        <text>4-aminobutanal + NAD(+) + H2O = 4-aminobutanoate + NADH + 2 H(+)</text>
        <dbReference type="Rhea" id="RHEA:19105"/>
        <dbReference type="ChEBI" id="CHEBI:15377"/>
        <dbReference type="ChEBI" id="CHEBI:15378"/>
        <dbReference type="ChEBI" id="CHEBI:57540"/>
        <dbReference type="ChEBI" id="CHEBI:57945"/>
        <dbReference type="ChEBI" id="CHEBI:58264"/>
        <dbReference type="ChEBI" id="CHEBI:59888"/>
        <dbReference type="EC" id="1.2.1.19"/>
    </reaction>
    <physiologicalReaction direction="left-to-right" evidence="3">
        <dbReference type="Rhea" id="RHEA:19106"/>
    </physiologicalReaction>
</comment>
<comment type="pathway">
    <text evidence="4">Cofactor metabolism; retinol metabolism.</text>
</comment>
<comment type="subunit">
    <text evidence="5">Homotetramer.</text>
</comment>
<comment type="subcellular location">
    <subcellularLocation>
        <location evidence="1">Cytoplasm</location>
        <location evidence="1">Cytosol</location>
    </subcellularLocation>
    <subcellularLocation>
        <location evidence="3">Cell projection</location>
        <location evidence="3">Axon</location>
    </subcellularLocation>
</comment>
<comment type="similarity">
    <text evidence="9">Belongs to the aldehyde dehydrogenase family.</text>
</comment>
<protein>
    <recommendedName>
        <fullName evidence="1">Aldehyde dehydrogenase 1A1</fullName>
        <ecNumber evidence="3">1.2.1.19</ecNumber>
        <ecNumber evidence="1">1.2.1.28</ecNumber>
        <ecNumber evidence="1">1.2.1.3</ecNumber>
        <ecNumber evidence="4">1.2.1.36</ecNumber>
    </recommendedName>
    <alternativeName>
        <fullName evidence="1">3-deoxyglucosone dehydrogenase</fullName>
    </alternativeName>
    <alternativeName>
        <fullName>ALDH-E1</fullName>
    </alternativeName>
    <alternativeName>
        <fullName>ALHDII</fullName>
    </alternativeName>
    <alternativeName>
        <fullName>Aldehyde dehydrogenase family 1 member A1</fullName>
    </alternativeName>
    <alternativeName>
        <fullName evidence="10">Aldehyde dehydrogenase, cytosolic</fullName>
    </alternativeName>
    <alternativeName>
        <fullName evidence="9">Retinal dehydrogenase 1</fullName>
        <shortName evidence="9">RALDH 1</shortName>
        <shortName evidence="9">RalDH1</shortName>
    </alternativeName>
</protein>
<feature type="chain" id="PRO_0000056421" description="Aldehyde dehydrogenase 1A1">
    <location>
        <begin position="1"/>
        <end position="509"/>
    </location>
</feature>
<feature type="active site" description="Proton acceptor" evidence="7 8">
    <location>
        <position position="277"/>
    </location>
</feature>
<feature type="active site" description="Nucleophile" evidence="7 8">
    <location>
        <position position="311"/>
    </location>
</feature>
<feature type="binding site" evidence="1">
    <location>
        <begin position="175"/>
        <end position="178"/>
    </location>
    <ligand>
        <name>NAD(+)</name>
        <dbReference type="ChEBI" id="CHEBI:57540"/>
    </ligand>
</feature>
<feature type="binding site" evidence="1">
    <location>
        <begin position="201"/>
        <end position="204"/>
    </location>
    <ligand>
        <name>NAD(+)</name>
        <dbReference type="ChEBI" id="CHEBI:57540"/>
    </ligand>
</feature>
<feature type="binding site" evidence="1">
    <location>
        <begin position="234"/>
        <end position="235"/>
    </location>
    <ligand>
        <name>NAD(+)</name>
        <dbReference type="ChEBI" id="CHEBI:57540"/>
    </ligand>
</feature>
<feature type="binding site" evidence="1">
    <location>
        <begin position="254"/>
        <end position="255"/>
    </location>
    <ligand>
        <name>NAD(+)</name>
        <dbReference type="ChEBI" id="CHEBI:57540"/>
    </ligand>
</feature>
<feature type="binding site" evidence="1">
    <location>
        <begin position="277"/>
        <end position="279"/>
    </location>
    <ligand>
        <name>NAD(+)</name>
        <dbReference type="ChEBI" id="CHEBI:57540"/>
    </ligand>
</feature>
<feature type="binding site" evidence="1">
    <location>
        <begin position="357"/>
        <end position="361"/>
    </location>
    <ligand>
        <name>NAD(+)</name>
        <dbReference type="ChEBI" id="CHEBI:57540"/>
    </ligand>
</feature>
<feature type="binding site" evidence="1">
    <location>
        <begin position="408"/>
        <end position="410"/>
    </location>
    <ligand>
        <name>NAD(+)</name>
        <dbReference type="ChEBI" id="CHEBI:57540"/>
    </ligand>
</feature>
<feature type="site" description="Transition state stabilizer" evidence="2">
    <location>
        <position position="178"/>
    </location>
</feature>
<evidence type="ECO:0000250" key="1">
    <source>
        <dbReference type="UniProtKB" id="P00352"/>
    </source>
</evidence>
<evidence type="ECO:0000250" key="2">
    <source>
        <dbReference type="UniProtKB" id="P20000"/>
    </source>
</evidence>
<evidence type="ECO:0000250" key="3">
    <source>
        <dbReference type="UniProtKB" id="P24549"/>
    </source>
</evidence>
<evidence type="ECO:0000250" key="4">
    <source>
        <dbReference type="UniProtKB" id="P51647"/>
    </source>
</evidence>
<evidence type="ECO:0000250" key="5">
    <source>
        <dbReference type="UniProtKB" id="P51977"/>
    </source>
</evidence>
<evidence type="ECO:0000250" key="6">
    <source>
        <dbReference type="UniProtKB" id="Q8HYE4"/>
    </source>
</evidence>
<evidence type="ECO:0000255" key="7">
    <source>
        <dbReference type="PROSITE-ProRule" id="PRU10007"/>
    </source>
</evidence>
<evidence type="ECO:0000255" key="8">
    <source>
        <dbReference type="PROSITE-ProRule" id="PRU10008"/>
    </source>
</evidence>
<evidence type="ECO:0000305" key="9"/>
<evidence type="ECO:0000305" key="10">
    <source>
    </source>
</evidence>
<keyword id="KW-0966">Cell projection</keyword>
<keyword id="KW-0963">Cytoplasm</keyword>
<keyword id="KW-0443">Lipid metabolism</keyword>
<keyword id="KW-0520">NAD</keyword>
<keyword id="KW-0560">Oxidoreductase</keyword>
<keyword id="KW-1185">Reference proteome</keyword>
<organism>
    <name type="scientific">Gallus gallus</name>
    <name type="common">Chicken</name>
    <dbReference type="NCBI Taxonomy" id="9031"/>
    <lineage>
        <taxon>Eukaryota</taxon>
        <taxon>Metazoa</taxon>
        <taxon>Chordata</taxon>
        <taxon>Craniata</taxon>
        <taxon>Vertebrata</taxon>
        <taxon>Euteleostomi</taxon>
        <taxon>Archelosauria</taxon>
        <taxon>Archosauria</taxon>
        <taxon>Dinosauria</taxon>
        <taxon>Saurischia</taxon>
        <taxon>Theropoda</taxon>
        <taxon>Coelurosauria</taxon>
        <taxon>Aves</taxon>
        <taxon>Neognathae</taxon>
        <taxon>Galloanserae</taxon>
        <taxon>Galliformes</taxon>
        <taxon>Phasianidae</taxon>
        <taxon>Phasianinae</taxon>
        <taxon>Gallus</taxon>
    </lineage>
</organism>
<proteinExistence type="evidence at transcript level"/>
<accession>P27463</accession>
<sequence length="509" mass="55809">MKKQGSPSNPAPVLPALPEPLKDLKIKYTKIFINNEWHDSVSGKKFEVFNPANEEKICEVAEGDKADIDKAVKAARKAFELGSPWRTMDASERGRLLNKLADLVERDRLTLATMEAIDGGKLFSTAYLMDLGACIKTIRYCAGWADKIHGRTVPMDGNFFTFTRHEPVGVCGQIIPWNFPLVMFIWKIAPALCCGNTVVVKPAEQTPLSALYMGSLIKEAGFPPGVVNIVPGFGPTAGAAISHHMDIDKVSFTGSTEVGKLIKEAAGKTNLKRVTLELGGKSPNIIFADADLDEAAEFAHIGLFYHQGQCCIAGSRIFVEEPIYDEFVRRSIERAKKYTLGDPLLPGVQQGPQIDKEQFQKILDLIESGKKEGAKLECGGGPWGNKGYFIQPTVFSNVTDDMRIAKEEIFGPVQQIMKFKTIDEVIKRANNTTYGLAAAVFTKDIDKALTFASALQAGTVWVNCYSAFSAQCPFGGFKMSGNGRELGEYGLQEYTEVKTVTIKIPQKNS</sequence>
<reference key="1">
    <citation type="journal article" date="1992" name="Exp. Eye Res.">
        <title>High levels of aldehyde dehydrogenase transcripts in the undifferentiated chick retina.</title>
        <authorList>
            <person name="Godbout R."/>
        </authorList>
    </citation>
    <scope>NUCLEOTIDE SEQUENCE [MRNA]</scope>
    <source>
        <tissue>Embryonic retina</tissue>
    </source>
</reference>